<sequence>MKLTCVLIITVLFLTASQLITADYSGDKRQYRAVRLRDEMRNFKGARDCGEQGQGCYTRPCCPGLHCAAGATGGGSCQP</sequence>
<dbReference type="SMR" id="P0DW75"/>
<dbReference type="GO" id="GO:0005576">
    <property type="term" value="C:extracellular region"/>
    <property type="evidence" value="ECO:0007669"/>
    <property type="project" value="UniProtKB-SubCell"/>
</dbReference>
<dbReference type="GO" id="GO:0008200">
    <property type="term" value="F:ion channel inhibitor activity"/>
    <property type="evidence" value="ECO:0007669"/>
    <property type="project" value="InterPro"/>
</dbReference>
<dbReference type="GO" id="GO:0090729">
    <property type="term" value="F:toxin activity"/>
    <property type="evidence" value="ECO:0007669"/>
    <property type="project" value="UniProtKB-KW"/>
</dbReference>
<dbReference type="InterPro" id="IPR004214">
    <property type="entry name" value="Conotoxin"/>
</dbReference>
<dbReference type="Pfam" id="PF02950">
    <property type="entry name" value="Conotoxin"/>
    <property type="match status" value="1"/>
</dbReference>
<proteinExistence type="inferred from homology"/>
<protein>
    <recommendedName>
        <fullName evidence="4">Conotoxin Vi6.4</fullName>
    </recommendedName>
</protein>
<reference key="1">
    <citation type="journal article" date="2016" name="Toxicon">
        <title>Glycine-rich conotoxins from the Virgiconus clade.</title>
        <authorList>
            <person name="Espino S.S."/>
            <person name="Dilanyan T."/>
            <person name="Imperial J.S."/>
            <person name="Aguilar M.B."/>
            <person name="Teichert R.W."/>
            <person name="Bandyopadhyay P."/>
            <person name="Olivera B.M."/>
        </authorList>
    </citation>
    <scope>NUCLEOTIDE SEQUENCE [MRNA]</scope>
    <source>
        <tissue>Venom duct</tissue>
    </source>
</reference>
<keyword id="KW-1015">Disulfide bond</keyword>
<keyword id="KW-0379">Hydroxylation</keyword>
<keyword id="KW-0872">Ion channel impairing toxin</keyword>
<keyword id="KW-0960">Knottin</keyword>
<keyword id="KW-0964">Secreted</keyword>
<keyword id="KW-0732">Signal</keyword>
<keyword id="KW-0800">Toxin</keyword>
<accession>P0DW75</accession>
<evidence type="ECO:0000250" key="1">
    <source>
        <dbReference type="UniProtKB" id="P60179"/>
    </source>
</evidence>
<evidence type="ECO:0000250" key="2">
    <source>
        <dbReference type="UniProtKB" id="Q5K0C7"/>
    </source>
</evidence>
<evidence type="ECO:0000255" key="3"/>
<evidence type="ECO:0000303" key="4">
    <source>
    </source>
</evidence>
<evidence type="ECO:0000305" key="5"/>
<evidence type="ECO:0000305" key="6">
    <source>
    </source>
</evidence>
<name>O164_CONVR</name>
<comment type="function">
    <text evidence="2">Ion channel inhibitor that inhibits the increase in intracellular calcium upon depolarization in DRG neurons. In vivo, both intraperitoneal and intracranial injections into mice induce hyperactivity.</text>
</comment>
<comment type="subcellular location">
    <subcellularLocation>
        <location evidence="6">Secreted</location>
    </subcellularLocation>
</comment>
<comment type="tissue specificity">
    <text evidence="6">Expressed by the venom duct.</text>
</comment>
<comment type="domain">
    <text evidence="5">The presence of a 'disulfide through disulfide knot' structurally defines this protein as a knottin.</text>
</comment>
<comment type="domain">
    <text evidence="5">The cysteine framework is VI/VII (C-C-CC-C-C).</text>
</comment>
<comment type="similarity">
    <text evidence="5">Belongs to the conotoxin O1 superfamily.</text>
</comment>
<organism>
    <name type="scientific">Conus virgo</name>
    <name type="common">Virgin cone</name>
    <dbReference type="NCBI Taxonomy" id="89427"/>
    <lineage>
        <taxon>Eukaryota</taxon>
        <taxon>Metazoa</taxon>
        <taxon>Spiralia</taxon>
        <taxon>Lophotrochozoa</taxon>
        <taxon>Mollusca</taxon>
        <taxon>Gastropoda</taxon>
        <taxon>Caenogastropoda</taxon>
        <taxon>Neogastropoda</taxon>
        <taxon>Conoidea</taxon>
        <taxon>Conidae</taxon>
        <taxon>Conus</taxon>
        <taxon>Virgiconus</taxon>
    </lineage>
</organism>
<feature type="signal peptide" evidence="3">
    <location>
        <begin position="1"/>
        <end position="22"/>
    </location>
</feature>
<feature type="propeptide" id="PRO_0000456326" evidence="2">
    <location>
        <begin position="23"/>
        <end position="47"/>
    </location>
</feature>
<feature type="peptide" id="PRO_0000456327" description="Conotoxin Vi6.4" evidence="2">
    <location>
        <begin position="48"/>
        <end position="79"/>
    </location>
</feature>
<feature type="modified residue" description="4-hydroxyproline" evidence="2">
    <location>
        <position position="60"/>
    </location>
</feature>
<feature type="modified residue" description="4-hydroxyproline" evidence="2">
    <location>
        <position position="63"/>
    </location>
</feature>
<feature type="disulfide bond" evidence="1">
    <location>
        <begin position="49"/>
        <end position="62"/>
    </location>
</feature>
<feature type="disulfide bond" evidence="1">
    <location>
        <begin position="56"/>
        <end position="67"/>
    </location>
</feature>
<feature type="disulfide bond" evidence="1">
    <location>
        <begin position="61"/>
        <end position="77"/>
    </location>
</feature>